<gene>
    <name evidence="1" type="primary">dut</name>
    <name type="ordered locus">mma_0825</name>
</gene>
<comment type="function">
    <text evidence="1">This enzyme is involved in nucleotide metabolism: it produces dUMP, the immediate precursor of thymidine nucleotides and it decreases the intracellular concentration of dUTP so that uracil cannot be incorporated into DNA.</text>
</comment>
<comment type="catalytic activity">
    <reaction evidence="1">
        <text>dUTP + H2O = dUMP + diphosphate + H(+)</text>
        <dbReference type="Rhea" id="RHEA:10248"/>
        <dbReference type="ChEBI" id="CHEBI:15377"/>
        <dbReference type="ChEBI" id="CHEBI:15378"/>
        <dbReference type="ChEBI" id="CHEBI:33019"/>
        <dbReference type="ChEBI" id="CHEBI:61555"/>
        <dbReference type="ChEBI" id="CHEBI:246422"/>
        <dbReference type="EC" id="3.6.1.23"/>
    </reaction>
</comment>
<comment type="cofactor">
    <cofactor evidence="1">
        <name>Mg(2+)</name>
        <dbReference type="ChEBI" id="CHEBI:18420"/>
    </cofactor>
</comment>
<comment type="pathway">
    <text evidence="1">Pyrimidine metabolism; dUMP biosynthesis; dUMP from dCTP (dUTP route): step 2/2.</text>
</comment>
<comment type="similarity">
    <text evidence="1">Belongs to the dUTPase family.</text>
</comment>
<name>DUT_JANMA</name>
<organism>
    <name type="scientific">Janthinobacterium sp. (strain Marseille)</name>
    <name type="common">Minibacterium massiliensis</name>
    <dbReference type="NCBI Taxonomy" id="375286"/>
    <lineage>
        <taxon>Bacteria</taxon>
        <taxon>Pseudomonadati</taxon>
        <taxon>Pseudomonadota</taxon>
        <taxon>Betaproteobacteria</taxon>
        <taxon>Burkholderiales</taxon>
        <taxon>Oxalobacteraceae</taxon>
        <taxon>Janthinobacterium</taxon>
    </lineage>
</organism>
<accession>A6SW68</accession>
<sequence length="149" mass="15990">MKTIEVKILDPRMQEQLPAYATAGSAGLDLRACLDAPITIKPGETHLVPTGLAIHLADPGYAAMILPRSGMGHKHGIVLGNLVGLIDSDYQGQLMVSTWNRGQTEFTLNPMERLAQLVIVPVLQVGFNVVEEFDTSERGIGGFGSTGKH</sequence>
<dbReference type="EC" id="3.6.1.23" evidence="1"/>
<dbReference type="EMBL" id="CP000269">
    <property type="protein sequence ID" value="ABR88446.1"/>
    <property type="molecule type" value="Genomic_DNA"/>
</dbReference>
<dbReference type="RefSeq" id="WP_012078689.1">
    <property type="nucleotide sequence ID" value="NC_009659.1"/>
</dbReference>
<dbReference type="SMR" id="A6SW68"/>
<dbReference type="STRING" id="375286.mma_0825"/>
<dbReference type="KEGG" id="mms:mma_0825"/>
<dbReference type="eggNOG" id="COG0756">
    <property type="taxonomic scope" value="Bacteria"/>
</dbReference>
<dbReference type="HOGENOM" id="CLU_068508_1_1_4"/>
<dbReference type="OrthoDB" id="9809956at2"/>
<dbReference type="UniPathway" id="UPA00610">
    <property type="reaction ID" value="UER00666"/>
</dbReference>
<dbReference type="Proteomes" id="UP000006388">
    <property type="component" value="Chromosome"/>
</dbReference>
<dbReference type="GO" id="GO:0004170">
    <property type="term" value="F:dUTP diphosphatase activity"/>
    <property type="evidence" value="ECO:0007669"/>
    <property type="project" value="UniProtKB-UniRule"/>
</dbReference>
<dbReference type="GO" id="GO:0000287">
    <property type="term" value="F:magnesium ion binding"/>
    <property type="evidence" value="ECO:0007669"/>
    <property type="project" value="UniProtKB-UniRule"/>
</dbReference>
<dbReference type="GO" id="GO:0006226">
    <property type="term" value="P:dUMP biosynthetic process"/>
    <property type="evidence" value="ECO:0007669"/>
    <property type="project" value="UniProtKB-UniRule"/>
</dbReference>
<dbReference type="GO" id="GO:0046081">
    <property type="term" value="P:dUTP catabolic process"/>
    <property type="evidence" value="ECO:0007669"/>
    <property type="project" value="InterPro"/>
</dbReference>
<dbReference type="CDD" id="cd07557">
    <property type="entry name" value="trimeric_dUTPase"/>
    <property type="match status" value="1"/>
</dbReference>
<dbReference type="FunFam" id="2.70.40.10:FF:000002">
    <property type="entry name" value="dUTP diphosphatase"/>
    <property type="match status" value="1"/>
</dbReference>
<dbReference type="Gene3D" id="2.70.40.10">
    <property type="match status" value="1"/>
</dbReference>
<dbReference type="HAMAP" id="MF_00116">
    <property type="entry name" value="dUTPase_bact"/>
    <property type="match status" value="1"/>
</dbReference>
<dbReference type="InterPro" id="IPR008181">
    <property type="entry name" value="dUTPase"/>
</dbReference>
<dbReference type="InterPro" id="IPR029054">
    <property type="entry name" value="dUTPase-like"/>
</dbReference>
<dbReference type="InterPro" id="IPR036157">
    <property type="entry name" value="dUTPase-like_sf"/>
</dbReference>
<dbReference type="InterPro" id="IPR033704">
    <property type="entry name" value="dUTPase_trimeric"/>
</dbReference>
<dbReference type="NCBIfam" id="TIGR00576">
    <property type="entry name" value="dut"/>
    <property type="match status" value="1"/>
</dbReference>
<dbReference type="NCBIfam" id="NF001862">
    <property type="entry name" value="PRK00601.1"/>
    <property type="match status" value="1"/>
</dbReference>
<dbReference type="PANTHER" id="PTHR11241">
    <property type="entry name" value="DEOXYURIDINE 5'-TRIPHOSPHATE NUCLEOTIDOHYDROLASE"/>
    <property type="match status" value="1"/>
</dbReference>
<dbReference type="PANTHER" id="PTHR11241:SF0">
    <property type="entry name" value="DEOXYURIDINE 5'-TRIPHOSPHATE NUCLEOTIDOHYDROLASE"/>
    <property type="match status" value="1"/>
</dbReference>
<dbReference type="Pfam" id="PF00692">
    <property type="entry name" value="dUTPase"/>
    <property type="match status" value="1"/>
</dbReference>
<dbReference type="SUPFAM" id="SSF51283">
    <property type="entry name" value="dUTPase-like"/>
    <property type="match status" value="1"/>
</dbReference>
<keyword id="KW-0378">Hydrolase</keyword>
<keyword id="KW-0460">Magnesium</keyword>
<keyword id="KW-0479">Metal-binding</keyword>
<keyword id="KW-0546">Nucleotide metabolism</keyword>
<reference key="1">
    <citation type="journal article" date="2007" name="PLoS Genet.">
        <title>Genome analysis of Minibacterium massiliensis highlights the convergent evolution of water-living bacteria.</title>
        <authorList>
            <person name="Audic S."/>
            <person name="Robert C."/>
            <person name="Campagna B."/>
            <person name="Parinello H."/>
            <person name="Claverie J.-M."/>
            <person name="Raoult D."/>
            <person name="Drancourt M."/>
        </authorList>
    </citation>
    <scope>NUCLEOTIDE SEQUENCE [LARGE SCALE GENOMIC DNA]</scope>
    <source>
        <strain>Marseille</strain>
    </source>
</reference>
<protein>
    <recommendedName>
        <fullName evidence="1">Deoxyuridine 5'-triphosphate nucleotidohydrolase</fullName>
        <shortName evidence="1">dUTPase</shortName>
        <ecNumber evidence="1">3.6.1.23</ecNumber>
    </recommendedName>
    <alternativeName>
        <fullName evidence="1">dUTP pyrophosphatase</fullName>
    </alternativeName>
</protein>
<proteinExistence type="inferred from homology"/>
<feature type="chain" id="PRO_1000057775" description="Deoxyuridine 5'-triphosphate nucleotidohydrolase">
    <location>
        <begin position="1"/>
        <end position="149"/>
    </location>
</feature>
<feature type="binding site" evidence="1">
    <location>
        <begin position="68"/>
        <end position="70"/>
    </location>
    <ligand>
        <name>substrate</name>
    </ligand>
</feature>
<feature type="binding site" evidence="1">
    <location>
        <position position="81"/>
    </location>
    <ligand>
        <name>substrate</name>
    </ligand>
</feature>
<feature type="binding site" evidence="1">
    <location>
        <begin position="85"/>
        <end position="87"/>
    </location>
    <ligand>
        <name>substrate</name>
    </ligand>
</feature>
<feature type="binding site" evidence="1">
    <location>
        <position position="95"/>
    </location>
    <ligand>
        <name>substrate</name>
    </ligand>
</feature>
<evidence type="ECO:0000255" key="1">
    <source>
        <dbReference type="HAMAP-Rule" id="MF_00116"/>
    </source>
</evidence>